<accession>A7N9Q8</accession>
<feature type="chain" id="PRO_1000001901" description="Glutamate--tRNA ligase">
    <location>
        <begin position="1"/>
        <end position="468"/>
    </location>
</feature>
<feature type="short sequence motif" description="'HIGH' region" evidence="1">
    <location>
        <begin position="8"/>
        <end position="18"/>
    </location>
</feature>
<feature type="short sequence motif" description="'KMSKS' region" evidence="1">
    <location>
        <begin position="236"/>
        <end position="240"/>
    </location>
</feature>
<feature type="binding site" evidence="1">
    <location>
        <position position="97"/>
    </location>
    <ligand>
        <name>Zn(2+)</name>
        <dbReference type="ChEBI" id="CHEBI:29105"/>
    </ligand>
</feature>
<feature type="binding site" evidence="1">
    <location>
        <position position="99"/>
    </location>
    <ligand>
        <name>Zn(2+)</name>
        <dbReference type="ChEBI" id="CHEBI:29105"/>
    </ligand>
</feature>
<feature type="binding site" evidence="1">
    <location>
        <position position="124"/>
    </location>
    <ligand>
        <name>Zn(2+)</name>
        <dbReference type="ChEBI" id="CHEBI:29105"/>
    </ligand>
</feature>
<feature type="binding site" evidence="1">
    <location>
        <position position="126"/>
    </location>
    <ligand>
        <name>Zn(2+)</name>
        <dbReference type="ChEBI" id="CHEBI:29105"/>
    </ligand>
</feature>
<feature type="binding site" evidence="1">
    <location>
        <position position="239"/>
    </location>
    <ligand>
        <name>ATP</name>
        <dbReference type="ChEBI" id="CHEBI:30616"/>
    </ligand>
</feature>
<comment type="function">
    <text evidence="1">Catalyzes the attachment of glutamate to tRNA(Glu) in a two-step reaction: glutamate is first activated by ATP to form Glu-AMP and then transferred to the acceptor end of tRNA(Glu).</text>
</comment>
<comment type="catalytic activity">
    <reaction evidence="1">
        <text>tRNA(Glu) + L-glutamate + ATP = L-glutamyl-tRNA(Glu) + AMP + diphosphate</text>
        <dbReference type="Rhea" id="RHEA:23540"/>
        <dbReference type="Rhea" id="RHEA-COMP:9663"/>
        <dbReference type="Rhea" id="RHEA-COMP:9680"/>
        <dbReference type="ChEBI" id="CHEBI:29985"/>
        <dbReference type="ChEBI" id="CHEBI:30616"/>
        <dbReference type="ChEBI" id="CHEBI:33019"/>
        <dbReference type="ChEBI" id="CHEBI:78442"/>
        <dbReference type="ChEBI" id="CHEBI:78520"/>
        <dbReference type="ChEBI" id="CHEBI:456215"/>
        <dbReference type="EC" id="6.1.1.17"/>
    </reaction>
</comment>
<comment type="cofactor">
    <cofactor evidence="1">
        <name>Zn(2+)</name>
        <dbReference type="ChEBI" id="CHEBI:29105"/>
    </cofactor>
    <text evidence="1">Binds 1 zinc ion per subunit.</text>
</comment>
<comment type="subunit">
    <text evidence="1">Monomer.</text>
</comment>
<comment type="subcellular location">
    <subcellularLocation>
        <location evidence="1">Cytoplasm</location>
    </subcellularLocation>
</comment>
<comment type="similarity">
    <text evidence="1">Belongs to the class-I aminoacyl-tRNA synthetase family. Glutamate--tRNA ligase type 1 subfamily.</text>
</comment>
<name>SYE_FRATF</name>
<evidence type="ECO:0000255" key="1">
    <source>
        <dbReference type="HAMAP-Rule" id="MF_00022"/>
    </source>
</evidence>
<proteinExistence type="inferred from homology"/>
<reference key="1">
    <citation type="journal article" date="2009" name="PLoS ONE">
        <title>Complete genome sequence of Francisella tularensis subspecies holarctica FTNF002-00.</title>
        <authorList>
            <person name="Barabote R.D."/>
            <person name="Xie G."/>
            <person name="Brettin T.S."/>
            <person name="Hinrichs S.H."/>
            <person name="Fey P.D."/>
            <person name="Jay J.J."/>
            <person name="Engle J.L."/>
            <person name="Godbole S.D."/>
            <person name="Noronha J.M."/>
            <person name="Scheuermann R.H."/>
            <person name="Zhou L.W."/>
            <person name="Lion C."/>
            <person name="Dempsey M.P."/>
        </authorList>
    </citation>
    <scope>NUCLEOTIDE SEQUENCE [LARGE SCALE GENOMIC DNA]</scope>
    <source>
        <strain>FTNF002-00 / FTA</strain>
    </source>
</reference>
<protein>
    <recommendedName>
        <fullName evidence="1">Glutamate--tRNA ligase</fullName>
        <ecNumber evidence="1">6.1.1.17</ecNumber>
    </recommendedName>
    <alternativeName>
        <fullName evidence="1">Glutamyl-tRNA synthetase</fullName>
        <shortName evidence="1">GluRS</shortName>
    </alternativeName>
</protein>
<gene>
    <name evidence="1" type="primary">gltX</name>
    <name type="ordered locus">FTA_0234</name>
</gene>
<organism>
    <name type="scientific">Francisella tularensis subsp. holarctica (strain FTNF002-00 / FTA)</name>
    <dbReference type="NCBI Taxonomy" id="458234"/>
    <lineage>
        <taxon>Bacteria</taxon>
        <taxon>Pseudomonadati</taxon>
        <taxon>Pseudomonadota</taxon>
        <taxon>Gammaproteobacteria</taxon>
        <taxon>Thiotrichales</taxon>
        <taxon>Francisellaceae</taxon>
        <taxon>Francisella</taxon>
    </lineage>
</organism>
<keyword id="KW-0030">Aminoacyl-tRNA synthetase</keyword>
<keyword id="KW-0067">ATP-binding</keyword>
<keyword id="KW-0963">Cytoplasm</keyword>
<keyword id="KW-0436">Ligase</keyword>
<keyword id="KW-0479">Metal-binding</keyword>
<keyword id="KW-0547">Nucleotide-binding</keyword>
<keyword id="KW-0648">Protein biosynthesis</keyword>
<keyword id="KW-0862">Zinc</keyword>
<dbReference type="EC" id="6.1.1.17" evidence="1"/>
<dbReference type="EMBL" id="CP000803">
    <property type="protein sequence ID" value="ABU60711.1"/>
    <property type="molecule type" value="Genomic_DNA"/>
</dbReference>
<dbReference type="RefSeq" id="WP_003014275.1">
    <property type="nucleotide sequence ID" value="NC_009749.1"/>
</dbReference>
<dbReference type="SMR" id="A7N9Q8"/>
<dbReference type="KEGG" id="fta:FTA_0234"/>
<dbReference type="HOGENOM" id="CLU_015768_6_3_6"/>
<dbReference type="GO" id="GO:0005829">
    <property type="term" value="C:cytosol"/>
    <property type="evidence" value="ECO:0007669"/>
    <property type="project" value="TreeGrafter"/>
</dbReference>
<dbReference type="GO" id="GO:0005524">
    <property type="term" value="F:ATP binding"/>
    <property type="evidence" value="ECO:0007669"/>
    <property type="project" value="UniProtKB-UniRule"/>
</dbReference>
<dbReference type="GO" id="GO:0004818">
    <property type="term" value="F:glutamate-tRNA ligase activity"/>
    <property type="evidence" value="ECO:0007669"/>
    <property type="project" value="UniProtKB-UniRule"/>
</dbReference>
<dbReference type="GO" id="GO:0000049">
    <property type="term" value="F:tRNA binding"/>
    <property type="evidence" value="ECO:0007669"/>
    <property type="project" value="InterPro"/>
</dbReference>
<dbReference type="GO" id="GO:0008270">
    <property type="term" value="F:zinc ion binding"/>
    <property type="evidence" value="ECO:0007669"/>
    <property type="project" value="UniProtKB-UniRule"/>
</dbReference>
<dbReference type="GO" id="GO:0006424">
    <property type="term" value="P:glutamyl-tRNA aminoacylation"/>
    <property type="evidence" value="ECO:0007669"/>
    <property type="project" value="UniProtKB-UniRule"/>
</dbReference>
<dbReference type="CDD" id="cd00808">
    <property type="entry name" value="GluRS_core"/>
    <property type="match status" value="1"/>
</dbReference>
<dbReference type="FunFam" id="3.40.50.620:FF:000007">
    <property type="entry name" value="Glutamate--tRNA ligase"/>
    <property type="match status" value="1"/>
</dbReference>
<dbReference type="Gene3D" id="1.10.10.350">
    <property type="match status" value="1"/>
</dbReference>
<dbReference type="Gene3D" id="3.40.50.620">
    <property type="entry name" value="HUPs"/>
    <property type="match status" value="1"/>
</dbReference>
<dbReference type="HAMAP" id="MF_00022">
    <property type="entry name" value="Glu_tRNA_synth_type1"/>
    <property type="match status" value="1"/>
</dbReference>
<dbReference type="InterPro" id="IPR045462">
    <property type="entry name" value="aa-tRNA-synth_I_cd-bd"/>
</dbReference>
<dbReference type="InterPro" id="IPR020751">
    <property type="entry name" value="aa-tRNA-synth_I_codon-bd_sub2"/>
</dbReference>
<dbReference type="InterPro" id="IPR001412">
    <property type="entry name" value="aa-tRNA-synth_I_CS"/>
</dbReference>
<dbReference type="InterPro" id="IPR008925">
    <property type="entry name" value="aa_tRNA-synth_I_cd-bd_sf"/>
</dbReference>
<dbReference type="InterPro" id="IPR004527">
    <property type="entry name" value="Glu-tRNA-ligase_bac/mito"/>
</dbReference>
<dbReference type="InterPro" id="IPR000924">
    <property type="entry name" value="Glu/Gln-tRNA-synth"/>
</dbReference>
<dbReference type="InterPro" id="IPR020058">
    <property type="entry name" value="Glu/Gln-tRNA-synth_Ib_cat-dom"/>
</dbReference>
<dbReference type="InterPro" id="IPR049940">
    <property type="entry name" value="GluQ/Sye"/>
</dbReference>
<dbReference type="InterPro" id="IPR033910">
    <property type="entry name" value="GluRS_core"/>
</dbReference>
<dbReference type="InterPro" id="IPR014729">
    <property type="entry name" value="Rossmann-like_a/b/a_fold"/>
</dbReference>
<dbReference type="NCBIfam" id="TIGR00464">
    <property type="entry name" value="gltX_bact"/>
    <property type="match status" value="1"/>
</dbReference>
<dbReference type="PANTHER" id="PTHR43311">
    <property type="entry name" value="GLUTAMATE--TRNA LIGASE"/>
    <property type="match status" value="1"/>
</dbReference>
<dbReference type="PANTHER" id="PTHR43311:SF2">
    <property type="entry name" value="GLUTAMATE--TRNA LIGASE, MITOCHONDRIAL-RELATED"/>
    <property type="match status" value="1"/>
</dbReference>
<dbReference type="Pfam" id="PF19269">
    <property type="entry name" value="Anticodon_2"/>
    <property type="match status" value="1"/>
</dbReference>
<dbReference type="Pfam" id="PF00749">
    <property type="entry name" value="tRNA-synt_1c"/>
    <property type="match status" value="1"/>
</dbReference>
<dbReference type="PRINTS" id="PR00987">
    <property type="entry name" value="TRNASYNTHGLU"/>
</dbReference>
<dbReference type="SUPFAM" id="SSF48163">
    <property type="entry name" value="An anticodon-binding domain of class I aminoacyl-tRNA synthetases"/>
    <property type="match status" value="1"/>
</dbReference>
<dbReference type="SUPFAM" id="SSF52374">
    <property type="entry name" value="Nucleotidylyl transferase"/>
    <property type="match status" value="1"/>
</dbReference>
<dbReference type="PROSITE" id="PS00178">
    <property type="entry name" value="AA_TRNA_LIGASE_I"/>
    <property type="match status" value="1"/>
</dbReference>
<sequence>MITTRFAPSPTGFLHVGGVRTALFSWLYAKNNNGKFILRIEDTDLERSTQEAVDAILDGMSWLGLKNDGEIYYQTKRFDRYKEVIQELIADGKAYYCSCSKERLEELREYQQANNLKTGYDGKCRDANYIPQQGESYVVRFKNPQDGVVSWDDAVKGRISISNHELDDMIIQRADGSPTYNFCVVVDDIDMAITHIIRGDDHVNNTPKQINIYKALNANVPVFAHVPMILGPDGAKLSKRHGAVNVMQYREDGYLPQAILNYLVRLGWSHGDQEIFSIEEMIKAFNLEHINASPSRFDFEKLKWLNKHYIKESKFDDIQTEVEYHFAKIGLDISNGPDLKELVAVMAEKVDTLVELAEKSSYFYSDDISYDENAVKKHIKASTGEIFVKLLENFEALDAQQWQDPDVLYNIVSTTAEQCQVGMGKVGMPLRVAITSSGQSPDIGITLKLLGKNKVVARLTKALEELCK</sequence>